<accession>Q6YQV5</accession>
<keyword id="KW-0963">Cytoplasm</keyword>
<keyword id="KW-0274">FAD</keyword>
<keyword id="KW-0285">Flavoprotein</keyword>
<keyword id="KW-0520">NAD</keyword>
<keyword id="KW-0819">tRNA processing</keyword>
<feature type="chain" id="PRO_0000117144" description="tRNA uridine 5-carboxymethylaminomethyl modification enzyme MnmG">
    <location>
        <begin position="1"/>
        <end position="617"/>
    </location>
</feature>
<feature type="binding site" evidence="1">
    <location>
        <begin position="9"/>
        <end position="14"/>
    </location>
    <ligand>
        <name>FAD</name>
        <dbReference type="ChEBI" id="CHEBI:57692"/>
    </ligand>
</feature>
<feature type="binding site" evidence="1">
    <location>
        <position position="120"/>
    </location>
    <ligand>
        <name>FAD</name>
        <dbReference type="ChEBI" id="CHEBI:57692"/>
    </ligand>
</feature>
<feature type="binding site" evidence="1">
    <location>
        <position position="175"/>
    </location>
    <ligand>
        <name>FAD</name>
        <dbReference type="ChEBI" id="CHEBI:57692"/>
    </ligand>
</feature>
<feature type="binding site" evidence="1">
    <location>
        <begin position="267"/>
        <end position="281"/>
    </location>
    <ligand>
        <name>NAD(+)</name>
        <dbReference type="ChEBI" id="CHEBI:57540"/>
    </ligand>
</feature>
<feature type="binding site" evidence="1">
    <location>
        <position position="364"/>
    </location>
    <ligand>
        <name>FAD</name>
        <dbReference type="ChEBI" id="CHEBI:57692"/>
    </ligand>
</feature>
<gene>
    <name evidence="1" type="primary">mnmG</name>
    <name evidence="1" type="synonym">gidA</name>
    <name type="ordered locus">PAM_268</name>
</gene>
<sequence length="617" mass="68812">MIYDSIVIGAGHAGVEAALILAKKHNTLLITGSLKQVASLPCNPSIGGPAKGVVVREIDALGGVMAKAADLAQIQIKMLNSSKGPAVRALRAQIDKLEYPQIIFEILQKTLNLTLLEGLVNNLVIQNNQVQGVCLIDGTKINAKTVIITTGTYLASQILIGDTKKSSGPNGVPTTYGISTQLKELGFEVIRLKTGTPPRVKKNSIDYSQTKIQMGDNLEQIFSFVPQTNQRPQEPCFLTHTNQTTHQVIQKHLNQSAMYGGYVEGTGPRYCPSIEDKVVRFCDKNSHQIFIEPESLSLDEMYLQGLSTSMPQHVQHEILKTIPGLQNAQITKYAYAIEYDAFNPNQLKHSLETKKIQNLFLAGQMNGTSGYEEAACQGLMAGINASLKLQNKPPFVLKRNEAYIGVLIDDLITKGAKEPYRLLTSRAEFRLLLRHDNADLRLKDYGYQLGLIDEKDYNNFQNKKAKINLLLEKSKNYEILVNSDNLSYLKQQKSASLGEKTTLAQLLKRPELNFCTLQHFLQEKADKTIYEQVEIQIKYEGYIAKAQKEAQKLARLEQKKIPSKINYADIKNLSKEAQEKLDLIKPQTLGQATRILGVNQVDISILLVYLEKHHALL</sequence>
<protein>
    <recommendedName>
        <fullName evidence="1">tRNA uridine 5-carboxymethylaminomethyl modification enzyme MnmG</fullName>
    </recommendedName>
    <alternativeName>
        <fullName evidence="1">Glucose-inhibited division protein A</fullName>
    </alternativeName>
</protein>
<evidence type="ECO:0000255" key="1">
    <source>
        <dbReference type="HAMAP-Rule" id="MF_00129"/>
    </source>
</evidence>
<name>MNMG_ONYPE</name>
<dbReference type="EMBL" id="AP006628">
    <property type="protein sequence ID" value="BAD04353.1"/>
    <property type="molecule type" value="Genomic_DNA"/>
</dbReference>
<dbReference type="SMR" id="Q6YQV5"/>
<dbReference type="STRING" id="262768.PAM_268"/>
<dbReference type="KEGG" id="poy:PAM_268"/>
<dbReference type="eggNOG" id="COG0445">
    <property type="taxonomic scope" value="Bacteria"/>
</dbReference>
<dbReference type="HOGENOM" id="CLU_007831_2_2_14"/>
<dbReference type="BioCyc" id="OYEL262768:G1G26-325-MONOMER"/>
<dbReference type="Proteomes" id="UP000002523">
    <property type="component" value="Chromosome"/>
</dbReference>
<dbReference type="GO" id="GO:0005829">
    <property type="term" value="C:cytosol"/>
    <property type="evidence" value="ECO:0007669"/>
    <property type="project" value="TreeGrafter"/>
</dbReference>
<dbReference type="GO" id="GO:0050660">
    <property type="term" value="F:flavin adenine dinucleotide binding"/>
    <property type="evidence" value="ECO:0007669"/>
    <property type="project" value="UniProtKB-UniRule"/>
</dbReference>
<dbReference type="GO" id="GO:0030488">
    <property type="term" value="P:tRNA methylation"/>
    <property type="evidence" value="ECO:0007669"/>
    <property type="project" value="TreeGrafter"/>
</dbReference>
<dbReference type="GO" id="GO:0002098">
    <property type="term" value="P:tRNA wobble uridine modification"/>
    <property type="evidence" value="ECO:0007669"/>
    <property type="project" value="InterPro"/>
</dbReference>
<dbReference type="FunFam" id="1.10.150.570:FF:000001">
    <property type="entry name" value="tRNA uridine 5-carboxymethylaminomethyl modification enzyme MnmG"/>
    <property type="match status" value="1"/>
</dbReference>
<dbReference type="FunFam" id="3.50.50.60:FF:000002">
    <property type="entry name" value="tRNA uridine 5-carboxymethylaminomethyl modification enzyme MnmG"/>
    <property type="match status" value="1"/>
</dbReference>
<dbReference type="Gene3D" id="3.50.50.60">
    <property type="entry name" value="FAD/NAD(P)-binding domain"/>
    <property type="match status" value="2"/>
</dbReference>
<dbReference type="Gene3D" id="1.10.150.570">
    <property type="entry name" value="GidA associated domain, C-terminal subdomain"/>
    <property type="match status" value="1"/>
</dbReference>
<dbReference type="Gene3D" id="1.10.10.1800">
    <property type="entry name" value="tRNA uridine 5-carboxymethylaminomethyl modification enzyme MnmG/GidA"/>
    <property type="match status" value="1"/>
</dbReference>
<dbReference type="HAMAP" id="MF_00129">
    <property type="entry name" value="MnmG_GidA"/>
    <property type="match status" value="1"/>
</dbReference>
<dbReference type="InterPro" id="IPR036188">
    <property type="entry name" value="FAD/NAD-bd_sf"/>
</dbReference>
<dbReference type="InterPro" id="IPR049312">
    <property type="entry name" value="GIDA_C_N"/>
</dbReference>
<dbReference type="InterPro" id="IPR004416">
    <property type="entry name" value="MnmG"/>
</dbReference>
<dbReference type="InterPro" id="IPR002218">
    <property type="entry name" value="MnmG-rel"/>
</dbReference>
<dbReference type="InterPro" id="IPR020595">
    <property type="entry name" value="MnmG-rel_CS"/>
</dbReference>
<dbReference type="InterPro" id="IPR026904">
    <property type="entry name" value="MnmG_C"/>
</dbReference>
<dbReference type="InterPro" id="IPR047001">
    <property type="entry name" value="MnmG_C_subdom"/>
</dbReference>
<dbReference type="InterPro" id="IPR044920">
    <property type="entry name" value="MnmG_C_subdom_sf"/>
</dbReference>
<dbReference type="InterPro" id="IPR040131">
    <property type="entry name" value="MnmG_N"/>
</dbReference>
<dbReference type="NCBIfam" id="TIGR00136">
    <property type="entry name" value="mnmG_gidA"/>
    <property type="match status" value="1"/>
</dbReference>
<dbReference type="PANTHER" id="PTHR11806">
    <property type="entry name" value="GLUCOSE INHIBITED DIVISION PROTEIN A"/>
    <property type="match status" value="1"/>
</dbReference>
<dbReference type="PANTHER" id="PTHR11806:SF0">
    <property type="entry name" value="PROTEIN MTO1 HOMOLOG, MITOCHONDRIAL"/>
    <property type="match status" value="1"/>
</dbReference>
<dbReference type="Pfam" id="PF01134">
    <property type="entry name" value="GIDA"/>
    <property type="match status" value="1"/>
</dbReference>
<dbReference type="Pfam" id="PF21680">
    <property type="entry name" value="GIDA_C_1st"/>
    <property type="match status" value="1"/>
</dbReference>
<dbReference type="Pfam" id="PF13932">
    <property type="entry name" value="SAM_GIDA_C"/>
    <property type="match status" value="1"/>
</dbReference>
<dbReference type="SMART" id="SM01228">
    <property type="entry name" value="GIDA_assoc_3"/>
    <property type="match status" value="1"/>
</dbReference>
<dbReference type="SUPFAM" id="SSF51905">
    <property type="entry name" value="FAD/NAD(P)-binding domain"/>
    <property type="match status" value="1"/>
</dbReference>
<dbReference type="PROSITE" id="PS01280">
    <property type="entry name" value="GIDA_1"/>
    <property type="match status" value="1"/>
</dbReference>
<dbReference type="PROSITE" id="PS01281">
    <property type="entry name" value="GIDA_2"/>
    <property type="match status" value="1"/>
</dbReference>
<reference key="1">
    <citation type="journal article" date="2004" name="Nat. Genet.">
        <title>Reductive evolution suggested from the complete genome sequence of a plant-pathogenic phytoplasma.</title>
        <authorList>
            <person name="Oshima K."/>
            <person name="Kakizawa S."/>
            <person name="Nishigawa H."/>
            <person name="Jung H.-Y."/>
            <person name="Wei W."/>
            <person name="Suzuki S."/>
            <person name="Arashida R."/>
            <person name="Nakata D."/>
            <person name="Miyata S."/>
            <person name="Ugaki M."/>
            <person name="Namba S."/>
        </authorList>
    </citation>
    <scope>NUCLEOTIDE SEQUENCE [LARGE SCALE GENOMIC DNA]</scope>
    <source>
        <strain>OY-M</strain>
    </source>
</reference>
<comment type="function">
    <text evidence="1">NAD-binding protein involved in the addition of a carboxymethylaminomethyl (cmnm) group at the wobble position (U34) of certain tRNAs, forming tRNA-cmnm(5)s(2)U34.</text>
</comment>
<comment type="cofactor">
    <cofactor evidence="1">
        <name>FAD</name>
        <dbReference type="ChEBI" id="CHEBI:57692"/>
    </cofactor>
</comment>
<comment type="subunit">
    <text evidence="1">Homodimer. Heterotetramer of two MnmE and two MnmG subunits.</text>
</comment>
<comment type="subcellular location">
    <subcellularLocation>
        <location evidence="1">Cytoplasm</location>
    </subcellularLocation>
</comment>
<comment type="similarity">
    <text evidence="1">Belongs to the MnmG family.</text>
</comment>
<organism>
    <name type="scientific">Onion yellows phytoplasma (strain OY-M)</name>
    <dbReference type="NCBI Taxonomy" id="262768"/>
    <lineage>
        <taxon>Bacteria</taxon>
        <taxon>Bacillati</taxon>
        <taxon>Mycoplasmatota</taxon>
        <taxon>Mollicutes</taxon>
        <taxon>Acholeplasmatales</taxon>
        <taxon>Acholeplasmataceae</taxon>
        <taxon>Candidatus Phytoplasma</taxon>
        <taxon>16SrI (Aster yellows group)</taxon>
    </lineage>
</organism>
<proteinExistence type="inferred from homology"/>